<name>IL9R_HUMAN</name>
<comment type="function">
    <text evidence="1">Plays an important role in the immune response against parasites by acting as a receptor of IL9.</text>
</comment>
<comment type="subunit">
    <text evidence="1">Interacts with IL9.</text>
</comment>
<comment type="subcellular location">
    <subcellularLocation>
        <location>Cell membrane</location>
        <topology>Single-pass type I membrane protein</topology>
    </subcellularLocation>
    <subcellularLocation>
        <location>Secreted</location>
    </subcellularLocation>
</comment>
<comment type="alternative products">
    <event type="alternative splicing"/>
    <isoform>
        <id>Q01113-1</id>
        <name>1</name>
        <sequence type="displayed"/>
    </isoform>
    <isoform>
        <id>Q01113-2</id>
        <name>2</name>
        <sequence type="described" ref="VSP_039025"/>
    </isoform>
    <isoform>
        <id>Q01113-3</id>
        <name>3</name>
        <sequence type="described" ref="VSP_046207 VSP_046208 VSP_046209 VSP_046210"/>
    </isoform>
</comment>
<comment type="domain">
    <text>The WSXWS motif appears to be necessary for proper protein folding and thereby efficient intracellular transport and cell-surface receptor binding.</text>
</comment>
<comment type="domain">
    <text>The box 1 motif is required for JAK interaction and/or activation.</text>
</comment>
<comment type="miscellaneous">
    <text>The gene coding for this protein is located in the pseudoautosomal region 2 (PAR2) of X and Y chromosomes.</text>
</comment>
<comment type="similarity">
    <text evidence="8">Belongs to the type I cytokine receptor family. Type 4 subfamily.</text>
</comment>
<comment type="sequence caution" evidence="8">
    <conflict type="erroneous initiation">
        <sequence resource="EMBL-CDS" id="AAB30844"/>
    </conflict>
    <text>Extended N-terminus.</text>
</comment>
<dbReference type="EMBL" id="M84747">
    <property type="protein sequence ID" value="AAA58679.1"/>
    <property type="molecule type" value="mRNA"/>
</dbReference>
<dbReference type="EMBL" id="L39064">
    <property type="protein sequence ID" value="AAC29513.1"/>
    <property type="molecule type" value="Genomic_DNA"/>
</dbReference>
<dbReference type="EMBL" id="AJ271736">
    <property type="protein sequence ID" value="CAB96817.1"/>
    <property type="molecule type" value="Genomic_DNA"/>
</dbReference>
<dbReference type="EMBL" id="AY071830">
    <property type="protein sequence ID" value="AAL55435.1"/>
    <property type="molecule type" value="Genomic_DNA"/>
</dbReference>
<dbReference type="EMBL" id="CH471247">
    <property type="protein sequence ID" value="EAW55884.1"/>
    <property type="molecule type" value="Genomic_DNA"/>
</dbReference>
<dbReference type="EMBL" id="S71404">
    <property type="protein sequence ID" value="AAB30844.2"/>
    <property type="status" value="ALT_INIT"/>
    <property type="molecule type" value="mRNA"/>
</dbReference>
<dbReference type="EMBL" id="S71420">
    <property type="protein sequence ID" value="AAD14081.1"/>
    <property type="molecule type" value="Genomic_DNA"/>
</dbReference>
<dbReference type="CCDS" id="CCDS14771.4">
    <molecule id="Q01113-1"/>
</dbReference>
<dbReference type="CCDS" id="CCDS59180.1">
    <molecule id="Q01113-3"/>
</dbReference>
<dbReference type="PIR" id="B45268">
    <property type="entry name" value="B45268"/>
</dbReference>
<dbReference type="RefSeq" id="NP_002177.2">
    <molecule id="Q01113-1"/>
    <property type="nucleotide sequence ID" value="NM_002186.2"/>
</dbReference>
<dbReference type="RefSeq" id="NP_789743.2">
    <molecule id="Q01113-3"/>
    <property type="nucleotide sequence ID" value="NM_176786.2"/>
</dbReference>
<dbReference type="RefSeq" id="XP_011529456.1">
    <property type="nucleotide sequence ID" value="XM_011531154.2"/>
</dbReference>
<dbReference type="RefSeq" id="XP_011543951.1">
    <property type="nucleotide sequence ID" value="XM_011545649.2"/>
</dbReference>
<dbReference type="RefSeq" id="XP_016884986.1">
    <property type="nucleotide sequence ID" value="XM_017029497.1"/>
</dbReference>
<dbReference type="RefSeq" id="XP_016884987.1">
    <property type="nucleotide sequence ID" value="XM_017029498.1"/>
</dbReference>
<dbReference type="RefSeq" id="XP_016884988.1">
    <property type="nucleotide sequence ID" value="XM_017029499.1"/>
</dbReference>
<dbReference type="RefSeq" id="XP_016885535.1">
    <property type="nucleotide sequence ID" value="XM_017030046.1"/>
</dbReference>
<dbReference type="RefSeq" id="XP_016885536.1">
    <property type="nucleotide sequence ID" value="XM_017030047.1"/>
</dbReference>
<dbReference type="RefSeq" id="XP_016885537.1">
    <property type="nucleotide sequence ID" value="XM_017030048.1"/>
</dbReference>
<dbReference type="PDB" id="7OX5">
    <property type="method" value="X-ray"/>
    <property type="resolution" value="3.09 A"/>
    <property type="chains" value="A/C/E/G/I/K/M/O=40-261"/>
</dbReference>
<dbReference type="PDBsum" id="7OX5"/>
<dbReference type="SMR" id="Q01113"/>
<dbReference type="BioGRID" id="109795">
    <property type="interactions" value="28"/>
</dbReference>
<dbReference type="DIP" id="DIP-3156N"/>
<dbReference type="ELM" id="Q01113"/>
<dbReference type="FunCoup" id="Q01113">
    <property type="interactions" value="485"/>
</dbReference>
<dbReference type="IntAct" id="Q01113">
    <property type="interactions" value="15"/>
</dbReference>
<dbReference type="MINT" id="Q01113"/>
<dbReference type="STRING" id="9606.ENSP00000244174"/>
<dbReference type="GlyCosmos" id="Q01113">
    <property type="glycosylation" value="2 sites, No reported glycans"/>
</dbReference>
<dbReference type="GlyGen" id="Q01113">
    <property type="glycosylation" value="2 sites"/>
</dbReference>
<dbReference type="iPTMnet" id="Q01113"/>
<dbReference type="PhosphoSitePlus" id="Q01113"/>
<dbReference type="BioMuta" id="IL9R"/>
<dbReference type="DMDM" id="116242526"/>
<dbReference type="MassIVE" id="Q01113"/>
<dbReference type="PaxDb" id="9606-ENSP00000244174"/>
<dbReference type="PeptideAtlas" id="Q01113"/>
<dbReference type="ProteomicsDB" id="57919">
    <molecule id="Q01113-1"/>
</dbReference>
<dbReference type="ProteomicsDB" id="57920">
    <molecule id="Q01113-2"/>
</dbReference>
<dbReference type="ProteomicsDB" id="7556"/>
<dbReference type="Antibodypedia" id="4187">
    <property type="antibodies" value="456 antibodies from 32 providers"/>
</dbReference>
<dbReference type="DNASU" id="3581"/>
<dbReference type="Ensembl" id="ENST00000244174.11">
    <molecule id="Q01113-1"/>
    <property type="protein sequence ID" value="ENSP00000244174.5"/>
    <property type="gene ID" value="ENSG00000124334.19"/>
</dbReference>
<dbReference type="Ensembl" id="ENST00000369423.8">
    <molecule id="Q01113-3"/>
    <property type="protein sequence ID" value="ENSP00000358431.2"/>
    <property type="gene ID" value="ENSG00000124334.19"/>
</dbReference>
<dbReference type="Ensembl" id="ENST00000711286.1">
    <molecule id="Q01113-1"/>
    <property type="protein sequence ID" value="ENSP00000518617.1"/>
    <property type="gene ID" value="ENSG00000292373.2"/>
</dbReference>
<dbReference type="Ensembl" id="ENST00000850823.1">
    <molecule id="Q01113-3"/>
    <property type="protein sequence ID" value="ENSP00000520932.1"/>
    <property type="gene ID" value="ENSG00000292373.2"/>
</dbReference>
<dbReference type="GeneID" id="3581"/>
<dbReference type="KEGG" id="hsa:3581"/>
<dbReference type="MANE-Select" id="ENST00000244174.11">
    <property type="protein sequence ID" value="ENSP00000244174.5"/>
    <property type="RefSeq nucleotide sequence ID" value="NM_002186.3"/>
    <property type="RefSeq protein sequence ID" value="NP_002177.2"/>
</dbReference>
<dbReference type="UCSC" id="uc004fnu.2">
    <molecule id="Q01113-1"/>
    <property type="organism name" value="human"/>
</dbReference>
<dbReference type="AGR" id="HGNC:6030"/>
<dbReference type="CTD" id="3581"/>
<dbReference type="DisGeNET" id="3581"/>
<dbReference type="GeneCards" id="IL9R"/>
<dbReference type="HGNC" id="HGNC:6030">
    <property type="gene designation" value="IL9R"/>
</dbReference>
<dbReference type="HPA" id="ENSG00000124334">
    <property type="expression patterns" value="Tissue enhanced (lymphoid tissue, urinary bladder)"/>
</dbReference>
<dbReference type="MIM" id="300007">
    <property type="type" value="gene"/>
</dbReference>
<dbReference type="neXtProt" id="NX_Q01113"/>
<dbReference type="OpenTargets" id="ENSG00000124334"/>
<dbReference type="PharmGKB" id="PA29846"/>
<dbReference type="VEuPathDB" id="HostDB:ENSG00000124334"/>
<dbReference type="eggNOG" id="ENOG502SB39">
    <property type="taxonomic scope" value="Eukaryota"/>
</dbReference>
<dbReference type="GeneTree" id="ENSGT00510000049125"/>
<dbReference type="HOGENOM" id="CLU_614777_0_0_1"/>
<dbReference type="InParanoid" id="Q01113"/>
<dbReference type="OMA" id="VKRTFYQ"/>
<dbReference type="OrthoDB" id="8897483at2759"/>
<dbReference type="PAN-GO" id="Q01113">
    <property type="GO annotations" value="5 GO annotations based on evolutionary models"/>
</dbReference>
<dbReference type="PhylomeDB" id="Q01113"/>
<dbReference type="TreeFam" id="TF337874"/>
<dbReference type="PathwayCommons" id="Q01113"/>
<dbReference type="Reactome" id="R-HSA-8985947">
    <property type="pathway name" value="Interleukin-9 signaling"/>
</dbReference>
<dbReference type="SignaLink" id="Q01113"/>
<dbReference type="SIGNOR" id="Q01113"/>
<dbReference type="BioGRID-ORCS" id="3581">
    <property type="hits" value="62 hits in 611 CRISPR screens"/>
</dbReference>
<dbReference type="GeneWiki" id="Interleukin-9_receptor"/>
<dbReference type="GenomeRNAi" id="3581"/>
<dbReference type="Pharos" id="Q01113">
    <property type="development level" value="Tbio"/>
</dbReference>
<dbReference type="PRO" id="PR:Q01113"/>
<dbReference type="Proteomes" id="UP000005640">
    <property type="component" value="Chromosome X"/>
</dbReference>
<dbReference type="Proteomes" id="UP000005640">
    <property type="component" value="Chromosome Y"/>
</dbReference>
<dbReference type="RNAct" id="Q01113">
    <property type="molecule type" value="protein"/>
</dbReference>
<dbReference type="Bgee" id="ENSG00000124334">
    <property type="expression patterns" value="Expressed in primordial germ cell in gonad and 94 other cell types or tissues"/>
</dbReference>
<dbReference type="GO" id="GO:0009897">
    <property type="term" value="C:external side of plasma membrane"/>
    <property type="evidence" value="ECO:0000318"/>
    <property type="project" value="GO_Central"/>
</dbReference>
<dbReference type="GO" id="GO:0005615">
    <property type="term" value="C:extracellular space"/>
    <property type="evidence" value="ECO:0000304"/>
    <property type="project" value="ProtInc"/>
</dbReference>
<dbReference type="GO" id="GO:0005886">
    <property type="term" value="C:plasma membrane"/>
    <property type="evidence" value="ECO:0000314"/>
    <property type="project" value="UniProt"/>
</dbReference>
<dbReference type="GO" id="GO:0019983">
    <property type="term" value="F:interleukin-9 binding"/>
    <property type="evidence" value="ECO:0000318"/>
    <property type="project" value="GO_Central"/>
</dbReference>
<dbReference type="GO" id="GO:0004919">
    <property type="term" value="F:interleukin-9 receptor activity"/>
    <property type="evidence" value="ECO:0000314"/>
    <property type="project" value="UniProt"/>
</dbReference>
<dbReference type="GO" id="GO:0019221">
    <property type="term" value="P:cytokine-mediated signaling pathway"/>
    <property type="evidence" value="ECO:0000318"/>
    <property type="project" value="GO_Central"/>
</dbReference>
<dbReference type="GO" id="GO:0016064">
    <property type="term" value="P:immunoglobulin mediated immune response"/>
    <property type="evidence" value="ECO:0000318"/>
    <property type="project" value="GO_Central"/>
</dbReference>
<dbReference type="GO" id="GO:0038113">
    <property type="term" value="P:interleukin-9-mediated signaling pathway"/>
    <property type="evidence" value="ECO:0000314"/>
    <property type="project" value="UniProt"/>
</dbReference>
<dbReference type="GO" id="GO:0042127">
    <property type="term" value="P:regulation of cell population proliferation"/>
    <property type="evidence" value="ECO:0000304"/>
    <property type="project" value="GO_Central"/>
</dbReference>
<dbReference type="GO" id="GO:0007165">
    <property type="term" value="P:signal transduction"/>
    <property type="evidence" value="ECO:0000304"/>
    <property type="project" value="ProtInc"/>
</dbReference>
<dbReference type="FunFam" id="2.60.40.10:FF:001421">
    <property type="entry name" value="Interleukin 9 receptor"/>
    <property type="match status" value="1"/>
</dbReference>
<dbReference type="Gene3D" id="2.60.40.10">
    <property type="entry name" value="Immunoglobulins"/>
    <property type="match status" value="1"/>
</dbReference>
<dbReference type="InterPro" id="IPR003961">
    <property type="entry name" value="FN3_dom"/>
</dbReference>
<dbReference type="InterPro" id="IPR036116">
    <property type="entry name" value="FN3_sf"/>
</dbReference>
<dbReference type="InterPro" id="IPR003531">
    <property type="entry name" value="Hempt_rcpt_S_F1_CS"/>
</dbReference>
<dbReference type="InterPro" id="IPR013783">
    <property type="entry name" value="Ig-like_fold"/>
</dbReference>
<dbReference type="PANTHER" id="PTHR23037">
    <property type="entry name" value="CYTOKINE RECEPTOR"/>
    <property type="match status" value="1"/>
</dbReference>
<dbReference type="PANTHER" id="PTHR23037:SF29">
    <property type="entry name" value="INTERLEUKIN-9 RECEPTOR"/>
    <property type="match status" value="1"/>
</dbReference>
<dbReference type="SUPFAM" id="SSF49265">
    <property type="entry name" value="Fibronectin type III"/>
    <property type="match status" value="1"/>
</dbReference>
<dbReference type="PROSITE" id="PS50853">
    <property type="entry name" value="FN3"/>
    <property type="match status" value="1"/>
</dbReference>
<dbReference type="PROSITE" id="PS01355">
    <property type="entry name" value="HEMATOPO_REC_S_F1"/>
    <property type="match status" value="1"/>
</dbReference>
<gene>
    <name type="primary">IL9R</name>
</gene>
<proteinExistence type="evidence at protein level"/>
<organism>
    <name type="scientific">Homo sapiens</name>
    <name type="common">Human</name>
    <dbReference type="NCBI Taxonomy" id="9606"/>
    <lineage>
        <taxon>Eukaryota</taxon>
        <taxon>Metazoa</taxon>
        <taxon>Chordata</taxon>
        <taxon>Craniata</taxon>
        <taxon>Vertebrata</taxon>
        <taxon>Euteleostomi</taxon>
        <taxon>Mammalia</taxon>
        <taxon>Eutheria</taxon>
        <taxon>Euarchontoglires</taxon>
        <taxon>Primates</taxon>
        <taxon>Haplorrhini</taxon>
        <taxon>Catarrhini</taxon>
        <taxon>Hominidae</taxon>
        <taxon>Homo</taxon>
    </lineage>
</organism>
<keyword id="KW-0002">3D-structure</keyword>
<keyword id="KW-0025">Alternative splicing</keyword>
<keyword id="KW-1003">Cell membrane</keyword>
<keyword id="KW-0325">Glycoprotein</keyword>
<keyword id="KW-0472">Membrane</keyword>
<keyword id="KW-1267">Proteomics identification</keyword>
<keyword id="KW-0675">Receptor</keyword>
<keyword id="KW-1185">Reference proteome</keyword>
<keyword id="KW-0964">Secreted</keyword>
<keyword id="KW-0732">Signal</keyword>
<keyword id="KW-0812">Transmembrane</keyword>
<keyword id="KW-1133">Transmembrane helix</keyword>
<feature type="signal peptide" evidence="2">
    <location>
        <begin position="1"/>
        <end position="40"/>
    </location>
</feature>
<feature type="chain" id="PRO_0000010911" description="Interleukin-9 receptor">
    <location>
        <begin position="41"/>
        <end position="521"/>
    </location>
</feature>
<feature type="topological domain" description="Extracellular" evidence="2">
    <location>
        <begin position="41"/>
        <end position="270"/>
    </location>
</feature>
<feature type="transmembrane region" description="Helical" evidence="2">
    <location>
        <begin position="271"/>
        <end position="291"/>
    </location>
</feature>
<feature type="topological domain" description="Cytoplasmic" evidence="2">
    <location>
        <begin position="292"/>
        <end position="521"/>
    </location>
</feature>
<feature type="domain" description="Fibronectin type-III" evidence="3">
    <location>
        <begin position="149"/>
        <end position="259"/>
    </location>
</feature>
<feature type="region of interest" description="Disordered" evidence="4">
    <location>
        <begin position="413"/>
        <end position="439"/>
    </location>
</feature>
<feature type="short sequence motif" description="WSXWS motif">
    <location>
        <begin position="245"/>
        <end position="249"/>
    </location>
</feature>
<feature type="short sequence motif" description="Box 1 motif">
    <location>
        <begin position="301"/>
        <end position="309"/>
    </location>
</feature>
<feature type="compositionally biased region" description="Low complexity" evidence="4">
    <location>
        <begin position="429"/>
        <end position="439"/>
    </location>
</feature>
<feature type="glycosylation site" description="N-linked (GlcNAc...) asparagine" evidence="2">
    <location>
        <position position="117"/>
    </location>
</feature>
<feature type="glycosylation site" description="N-linked (GlcNAc...) asparagine" evidence="2">
    <location>
        <position position="156"/>
    </location>
</feature>
<feature type="splice variant" id="VSP_039025" description="In isoform 2." evidence="8">
    <location>
        <begin position="1"/>
        <end position="21"/>
    </location>
</feature>
<feature type="splice variant" id="VSP_046207" description="In isoform 3." evidence="8">
    <original>MGLGRCIWE</original>
    <variation>MPQTCDGTGQMHLGSNCCKNGQTLLQRTCHGVSCCGWWFQAARSILGKGPSAQSLA</variation>
    <location>
        <begin position="1"/>
        <end position="9"/>
    </location>
</feature>
<feature type="splice variant" id="VSP_046208" description="In isoform 3." evidence="8">
    <original>SNQAPGGTHKCILRGSECTVVLPPEAVLVPSDNFTITFHHCMSGREQVSLVDPEYLPRRHVKLDPPSDLQ</original>
    <variation>RLLAAHISASCGAVSAPSCCHLRQCSCHLTISPSLSTTACLGGSRSAWWTRSTCPGDT</variation>
    <location>
        <begin position="85"/>
        <end position="154"/>
    </location>
</feature>
<feature type="splice variant" id="VSP_046209" description="In isoform 3." evidence="8">
    <original>VKRIFYQNVPS</original>
    <variation>LGWGPTGPVCC</variation>
    <location>
        <begin position="297"/>
        <end position="307"/>
    </location>
</feature>
<feature type="splice variant" id="VSP_046210" description="In isoform 3." evidence="8">
    <location>
        <begin position="308"/>
        <end position="521"/>
    </location>
</feature>
<feature type="sequence variant" id="VAR_038784" description="In dbSNP:rs3093495." evidence="7">
    <original>R</original>
    <variation>K</variation>
    <location>
        <position position="63"/>
    </location>
</feature>
<feature type="sequence variant" id="VAR_014804" description="In dbSNP:rs6522." evidence="7">
    <original>E</original>
    <variation>Q</variation>
    <location>
        <position position="239"/>
    </location>
</feature>
<feature type="sequence variant" id="VAR_033920" description="In dbSNP:rs149119910." evidence="7">
    <original>Y</original>
    <variation>C</variation>
    <location>
        <position position="288"/>
    </location>
</feature>
<feature type="sequence variant" id="VAR_055348" description="In dbSNP:rs2230001." evidence="5 6">
    <original>G</original>
    <variation>R</variation>
    <location>
        <position position="331"/>
    </location>
</feature>
<feature type="sequence variant" id="VAR_055349" description="In dbSNP:rs2228650.">
    <original>R</original>
    <variation>H</variation>
    <location>
        <position position="365"/>
    </location>
</feature>
<feature type="sequence conflict" description="In Ref. 1; AAA58679 and 4; AAL55435." evidence="8" ref="1 4">
    <original>S</original>
    <variation>SS</variation>
    <location>
        <position position="438"/>
    </location>
</feature>
<feature type="helix" evidence="9">
    <location>
        <begin position="51"/>
        <end position="53"/>
    </location>
</feature>
<feature type="strand" evidence="9">
    <location>
        <begin position="54"/>
        <end position="58"/>
    </location>
</feature>
<feature type="strand" evidence="9">
    <location>
        <begin position="60"/>
        <end position="69"/>
    </location>
</feature>
<feature type="turn" evidence="9">
    <location>
        <begin position="71"/>
        <end position="74"/>
    </location>
</feature>
<feature type="strand" evidence="9">
    <location>
        <begin position="75"/>
        <end position="77"/>
    </location>
</feature>
<feature type="strand" evidence="9">
    <location>
        <begin position="80"/>
        <end position="87"/>
    </location>
</feature>
<feature type="strand" evidence="9">
    <location>
        <begin position="92"/>
        <end position="96"/>
    </location>
</feature>
<feature type="strand" evidence="9">
    <location>
        <begin position="99"/>
        <end position="105"/>
    </location>
</feature>
<feature type="helix" evidence="9">
    <location>
        <begin position="108"/>
        <end position="110"/>
    </location>
</feature>
<feature type="strand" evidence="9">
    <location>
        <begin position="118"/>
        <end position="125"/>
    </location>
</feature>
<feature type="strand" evidence="9">
    <location>
        <begin position="131"/>
        <end position="139"/>
    </location>
</feature>
<feature type="helix" evidence="9">
    <location>
        <begin position="141"/>
        <end position="143"/>
    </location>
</feature>
<feature type="strand" evidence="9">
    <location>
        <begin position="151"/>
        <end position="158"/>
    </location>
</feature>
<feature type="strand" evidence="9">
    <location>
        <begin position="161"/>
        <end position="167"/>
    </location>
</feature>
<feature type="helix" evidence="9">
    <location>
        <begin position="170"/>
        <end position="178"/>
    </location>
</feature>
<feature type="strand" evidence="9">
    <location>
        <begin position="179"/>
        <end position="187"/>
    </location>
</feature>
<feature type="helix" evidence="9">
    <location>
        <begin position="192"/>
        <end position="194"/>
    </location>
</feature>
<feature type="strand" evidence="9">
    <location>
        <begin position="196"/>
        <end position="203"/>
    </location>
</feature>
<feature type="strand" evidence="9">
    <location>
        <begin position="205"/>
        <end position="209"/>
    </location>
</feature>
<feature type="strand" evidence="9">
    <location>
        <begin position="218"/>
        <end position="228"/>
    </location>
</feature>
<feature type="helix" evidence="9">
    <location>
        <begin position="237"/>
        <end position="239"/>
    </location>
</feature>
<feature type="strand" evidence="9">
    <location>
        <begin position="252"/>
        <end position="255"/>
    </location>
</feature>
<reference key="1">
    <citation type="journal article" date="1992" name="Proc. Natl. Acad. Sci. U.S.A.">
        <title>Expression cloning of the murine and human interleukin 9 receptor cDNAs.</title>
        <authorList>
            <person name="Renauld J.-C."/>
            <person name="Druez C."/>
            <person name="Kermouni A."/>
            <person name="Houssiau F."/>
            <person name="Uyttenhove C."/>
            <person name="van Roost E."/>
            <person name="van Snick J."/>
        </authorList>
    </citation>
    <scope>NUCLEOTIDE SEQUENCE [MRNA] (ISOFORM 1)</scope>
    <scope>VARIANT ARG-331</scope>
</reference>
<reference key="2">
    <citation type="journal article" date="1995" name="Genomics">
        <title>The IL-9 receptor gene (IL9R): genomic structure, chromosomal localization in the pseudoautosomal region of the long arm of the sex chromosomes, and identification of IL9R pseudogenes at 9qter, 10pter, 16pter, and 18pter.</title>
        <authorList>
            <person name="Kermouni A."/>
            <person name="van Roost E."/>
            <person name="Arden K.C."/>
            <person name="Vermeesch J.R."/>
            <person name="Weiss S."/>
            <person name="Godelaine D."/>
            <person name="Flint J."/>
            <person name="Lurquin C."/>
            <person name="Szikora J.-P."/>
            <person name="Higgs D.R."/>
            <person name="Marynen P."/>
            <person name="Renauld J.-C."/>
        </authorList>
    </citation>
    <scope>NUCLEOTIDE SEQUENCE [GENOMIC DNA]</scope>
    <source>
        <tissue>Melanoma</tissue>
    </source>
</reference>
<reference key="3">
    <citation type="journal article" date="2000" name="Hum. Mol. Genet.">
        <title>Differentially regulated and evolved genes in the fully sequenced Xq/Yq pseudoautosomal region.</title>
        <authorList>
            <person name="Ciccodicola A."/>
            <person name="D'Esposito M."/>
            <person name="Esposito T."/>
            <person name="Gianfrancesco F."/>
            <person name="Migliaccio C."/>
            <person name="Miano M.G."/>
            <person name="Matarazzo M.R."/>
            <person name="Vacca M."/>
            <person name="Franze A."/>
            <person name="Cuccurese M."/>
            <person name="Cocchia M."/>
            <person name="Curci A."/>
            <person name="Terracciano A."/>
            <person name="Torino A."/>
            <person name="Cocchia S."/>
            <person name="Mercadante G."/>
            <person name="Pannone E."/>
            <person name="Archidiacono N."/>
            <person name="Rocchi M."/>
            <person name="Schlessinger D."/>
            <person name="D'Urso M."/>
        </authorList>
    </citation>
    <scope>NUCLEOTIDE SEQUENCE [GENOMIC DNA]</scope>
</reference>
<reference key="4">
    <citation type="submission" date="2001-12" db="EMBL/GenBank/DDBJ databases">
        <authorList>
            <consortium name="SeattleSNPs variation discovery resource"/>
        </authorList>
    </citation>
    <scope>NUCLEOTIDE SEQUENCE [GENOMIC DNA]</scope>
    <scope>VARIANTS LYS-63; GLN-239 AND CYS-288</scope>
</reference>
<reference key="5">
    <citation type="journal article" date="2005" name="Nature">
        <title>The DNA sequence of the human X chromosome.</title>
        <authorList>
            <person name="Ross M.T."/>
            <person name="Grafham D.V."/>
            <person name="Coffey A.J."/>
            <person name="Scherer S."/>
            <person name="McLay K."/>
            <person name="Muzny D."/>
            <person name="Platzer M."/>
            <person name="Howell G.R."/>
            <person name="Burrows C."/>
            <person name="Bird C.P."/>
            <person name="Frankish A."/>
            <person name="Lovell F.L."/>
            <person name="Howe K.L."/>
            <person name="Ashurst J.L."/>
            <person name="Fulton R.S."/>
            <person name="Sudbrak R."/>
            <person name="Wen G."/>
            <person name="Jones M.C."/>
            <person name="Hurles M.E."/>
            <person name="Andrews T.D."/>
            <person name="Scott C.E."/>
            <person name="Searle S."/>
            <person name="Ramser J."/>
            <person name="Whittaker A."/>
            <person name="Deadman R."/>
            <person name="Carter N.P."/>
            <person name="Hunt S.E."/>
            <person name="Chen R."/>
            <person name="Cree A."/>
            <person name="Gunaratne P."/>
            <person name="Havlak P."/>
            <person name="Hodgson A."/>
            <person name="Metzker M.L."/>
            <person name="Richards S."/>
            <person name="Scott G."/>
            <person name="Steffen D."/>
            <person name="Sodergren E."/>
            <person name="Wheeler D.A."/>
            <person name="Worley K.C."/>
            <person name="Ainscough R."/>
            <person name="Ambrose K.D."/>
            <person name="Ansari-Lari M.A."/>
            <person name="Aradhya S."/>
            <person name="Ashwell R.I."/>
            <person name="Babbage A.K."/>
            <person name="Bagguley C.L."/>
            <person name="Ballabio A."/>
            <person name="Banerjee R."/>
            <person name="Barker G.E."/>
            <person name="Barlow K.F."/>
            <person name="Barrett I.P."/>
            <person name="Bates K.N."/>
            <person name="Beare D.M."/>
            <person name="Beasley H."/>
            <person name="Beasley O."/>
            <person name="Beck A."/>
            <person name="Bethel G."/>
            <person name="Blechschmidt K."/>
            <person name="Brady N."/>
            <person name="Bray-Allen S."/>
            <person name="Bridgeman A.M."/>
            <person name="Brown A.J."/>
            <person name="Brown M.J."/>
            <person name="Bonnin D."/>
            <person name="Bruford E.A."/>
            <person name="Buhay C."/>
            <person name="Burch P."/>
            <person name="Burford D."/>
            <person name="Burgess J."/>
            <person name="Burrill W."/>
            <person name="Burton J."/>
            <person name="Bye J.M."/>
            <person name="Carder C."/>
            <person name="Carrel L."/>
            <person name="Chako J."/>
            <person name="Chapman J.C."/>
            <person name="Chavez D."/>
            <person name="Chen E."/>
            <person name="Chen G."/>
            <person name="Chen Y."/>
            <person name="Chen Z."/>
            <person name="Chinault C."/>
            <person name="Ciccodicola A."/>
            <person name="Clark S.Y."/>
            <person name="Clarke G."/>
            <person name="Clee C.M."/>
            <person name="Clegg S."/>
            <person name="Clerc-Blankenburg K."/>
            <person name="Clifford K."/>
            <person name="Cobley V."/>
            <person name="Cole C.G."/>
            <person name="Conquer J.S."/>
            <person name="Corby N."/>
            <person name="Connor R.E."/>
            <person name="David R."/>
            <person name="Davies J."/>
            <person name="Davis C."/>
            <person name="Davis J."/>
            <person name="Delgado O."/>
            <person name="Deshazo D."/>
            <person name="Dhami P."/>
            <person name="Ding Y."/>
            <person name="Dinh H."/>
            <person name="Dodsworth S."/>
            <person name="Draper H."/>
            <person name="Dugan-Rocha S."/>
            <person name="Dunham A."/>
            <person name="Dunn M."/>
            <person name="Durbin K.J."/>
            <person name="Dutta I."/>
            <person name="Eades T."/>
            <person name="Ellwood M."/>
            <person name="Emery-Cohen A."/>
            <person name="Errington H."/>
            <person name="Evans K.L."/>
            <person name="Faulkner L."/>
            <person name="Francis F."/>
            <person name="Frankland J."/>
            <person name="Fraser A.E."/>
            <person name="Galgoczy P."/>
            <person name="Gilbert J."/>
            <person name="Gill R."/>
            <person name="Gloeckner G."/>
            <person name="Gregory S.G."/>
            <person name="Gribble S."/>
            <person name="Griffiths C."/>
            <person name="Grocock R."/>
            <person name="Gu Y."/>
            <person name="Gwilliam R."/>
            <person name="Hamilton C."/>
            <person name="Hart E.A."/>
            <person name="Hawes A."/>
            <person name="Heath P.D."/>
            <person name="Heitmann K."/>
            <person name="Hennig S."/>
            <person name="Hernandez J."/>
            <person name="Hinzmann B."/>
            <person name="Ho S."/>
            <person name="Hoffs M."/>
            <person name="Howden P.J."/>
            <person name="Huckle E.J."/>
            <person name="Hume J."/>
            <person name="Hunt P.J."/>
            <person name="Hunt A.R."/>
            <person name="Isherwood J."/>
            <person name="Jacob L."/>
            <person name="Johnson D."/>
            <person name="Jones S."/>
            <person name="de Jong P.J."/>
            <person name="Joseph S.S."/>
            <person name="Keenan S."/>
            <person name="Kelly S."/>
            <person name="Kershaw J.K."/>
            <person name="Khan Z."/>
            <person name="Kioschis P."/>
            <person name="Klages S."/>
            <person name="Knights A.J."/>
            <person name="Kosiura A."/>
            <person name="Kovar-Smith C."/>
            <person name="Laird G.K."/>
            <person name="Langford C."/>
            <person name="Lawlor S."/>
            <person name="Leversha M."/>
            <person name="Lewis L."/>
            <person name="Liu W."/>
            <person name="Lloyd C."/>
            <person name="Lloyd D.M."/>
            <person name="Loulseged H."/>
            <person name="Loveland J.E."/>
            <person name="Lovell J.D."/>
            <person name="Lozado R."/>
            <person name="Lu J."/>
            <person name="Lyne R."/>
            <person name="Ma J."/>
            <person name="Maheshwari M."/>
            <person name="Matthews L.H."/>
            <person name="McDowall J."/>
            <person name="McLaren S."/>
            <person name="McMurray A."/>
            <person name="Meidl P."/>
            <person name="Meitinger T."/>
            <person name="Milne S."/>
            <person name="Miner G."/>
            <person name="Mistry S.L."/>
            <person name="Morgan M."/>
            <person name="Morris S."/>
            <person name="Mueller I."/>
            <person name="Mullikin J.C."/>
            <person name="Nguyen N."/>
            <person name="Nordsiek G."/>
            <person name="Nyakatura G."/>
            <person name="O'dell C.N."/>
            <person name="Okwuonu G."/>
            <person name="Palmer S."/>
            <person name="Pandian R."/>
            <person name="Parker D."/>
            <person name="Parrish J."/>
            <person name="Pasternak S."/>
            <person name="Patel D."/>
            <person name="Pearce A.V."/>
            <person name="Pearson D.M."/>
            <person name="Pelan S.E."/>
            <person name="Perez L."/>
            <person name="Porter K.M."/>
            <person name="Ramsey Y."/>
            <person name="Reichwald K."/>
            <person name="Rhodes S."/>
            <person name="Ridler K.A."/>
            <person name="Schlessinger D."/>
            <person name="Schueler M.G."/>
            <person name="Sehra H.K."/>
            <person name="Shaw-Smith C."/>
            <person name="Shen H."/>
            <person name="Sheridan E.M."/>
            <person name="Shownkeen R."/>
            <person name="Skuce C.D."/>
            <person name="Smith M.L."/>
            <person name="Sotheran E.C."/>
            <person name="Steingruber H.E."/>
            <person name="Steward C.A."/>
            <person name="Storey R."/>
            <person name="Swann R.M."/>
            <person name="Swarbreck D."/>
            <person name="Tabor P.E."/>
            <person name="Taudien S."/>
            <person name="Taylor T."/>
            <person name="Teague B."/>
            <person name="Thomas K."/>
            <person name="Thorpe A."/>
            <person name="Timms K."/>
            <person name="Tracey A."/>
            <person name="Trevanion S."/>
            <person name="Tromans A.C."/>
            <person name="d'Urso M."/>
            <person name="Verduzco D."/>
            <person name="Villasana D."/>
            <person name="Waldron L."/>
            <person name="Wall M."/>
            <person name="Wang Q."/>
            <person name="Warren J."/>
            <person name="Warry G.L."/>
            <person name="Wei X."/>
            <person name="West A."/>
            <person name="Whitehead S.L."/>
            <person name="Whiteley M.N."/>
            <person name="Wilkinson J.E."/>
            <person name="Willey D.L."/>
            <person name="Williams G."/>
            <person name="Williams L."/>
            <person name="Williamson A."/>
            <person name="Williamson H."/>
            <person name="Wilming L."/>
            <person name="Woodmansey R.L."/>
            <person name="Wray P.W."/>
            <person name="Yen J."/>
            <person name="Zhang J."/>
            <person name="Zhou J."/>
            <person name="Zoghbi H."/>
            <person name="Zorilla S."/>
            <person name="Buck D."/>
            <person name="Reinhardt R."/>
            <person name="Poustka A."/>
            <person name="Rosenthal A."/>
            <person name="Lehrach H."/>
            <person name="Meindl A."/>
            <person name="Minx P.J."/>
            <person name="Hillier L.W."/>
            <person name="Willard H.F."/>
            <person name="Wilson R.K."/>
            <person name="Waterston R.H."/>
            <person name="Rice C.M."/>
            <person name="Vaudin M."/>
            <person name="Coulson A."/>
            <person name="Nelson D.L."/>
            <person name="Weinstock G."/>
            <person name="Sulston J.E."/>
            <person name="Durbin R.M."/>
            <person name="Hubbard T."/>
            <person name="Gibbs R.A."/>
            <person name="Beck S."/>
            <person name="Rogers J."/>
            <person name="Bentley D.R."/>
        </authorList>
    </citation>
    <scope>NUCLEOTIDE SEQUENCE [LARGE SCALE GENOMIC DNA]</scope>
</reference>
<reference key="6">
    <citation type="submission" date="2005-07" db="EMBL/GenBank/DDBJ databases">
        <authorList>
            <person name="Mural R.J."/>
            <person name="Istrail S."/>
            <person name="Sutton G.G."/>
            <person name="Florea L."/>
            <person name="Halpern A.L."/>
            <person name="Mobarry C.M."/>
            <person name="Lippert R."/>
            <person name="Walenz B."/>
            <person name="Shatkay H."/>
            <person name="Dew I."/>
            <person name="Miller J.R."/>
            <person name="Flanigan M.J."/>
            <person name="Edwards N.J."/>
            <person name="Bolanos R."/>
            <person name="Fasulo D."/>
            <person name="Halldorsson B.V."/>
            <person name="Hannenhalli S."/>
            <person name="Turner R."/>
            <person name="Yooseph S."/>
            <person name="Lu F."/>
            <person name="Nusskern D.R."/>
            <person name="Shue B.C."/>
            <person name="Zheng X.H."/>
            <person name="Zhong F."/>
            <person name="Delcher A.L."/>
            <person name="Huson D.H."/>
            <person name="Kravitz S.A."/>
            <person name="Mouchard L."/>
            <person name="Reinert K."/>
            <person name="Remington K.A."/>
            <person name="Clark A.G."/>
            <person name="Waterman M.S."/>
            <person name="Eichler E.E."/>
            <person name="Adams M.D."/>
            <person name="Hunkapiller M.W."/>
            <person name="Myers E.W."/>
            <person name="Venter J.C."/>
        </authorList>
    </citation>
    <scope>NUCLEOTIDE SEQUENCE [LARGE SCALE GENOMIC DNA]</scope>
</reference>
<reference key="7">
    <citation type="journal article" date="1994" name="Blood">
        <title>Isolation and characterization of the human interleukin-9 receptor gene.</title>
        <authorList>
            <person name="Chang M.S."/>
            <person name="Engel G."/>
            <person name="Benedict C."/>
            <person name="Basu R."/>
            <person name="McNinch J."/>
        </authorList>
    </citation>
    <scope>NUCLEOTIDE SEQUENCE [GENOMIC DNA] OF 22-33</scope>
    <scope>PARTIAL NUCLEOTIDE SEQUENCE [MRNA] (ISOFORM 2)</scope>
    <scope>VARIANT ARG-331</scope>
</reference>
<accession>Q01113</accession>
<accession>B9ZVT0</accession>
<accession>Q14634</accession>
<accession>Q8WWU1</accession>
<accession>Q96TF0</accession>
<sequence length="521" mass="57147">MGLGRCIWEGWTLESEALRRDMGTWLLACICICTCVCLGVSVTGEGQGPRSRTFTCLTNNILRIDCHWSAPELGQGSSPWLLFTSNQAPGGTHKCILRGSECTVVLPPEAVLVPSDNFTITFHHCMSGREQVSLVDPEYLPRRHVKLDPPSDLQSNISSGHCILTWSISPALEPMTTLLSYELAFKKQEEAWEQAQHRDHIVGVTWLILEAFELDPGFIHEARLRVQMATLEDDVVEEERYTGQWSEWSQPVCFQAPQRQGPLIPPWGWPGNTLVAVSIFLLLTGPTYLLFKLSPRVKRIFYQNVPSPAMFFQPLYSVHNGNFQTWMGAHGAGVLLSQDCAGTPQGALEPCVQEATALLTCGPARPWKSVALEEEQEGPGTRLPGNLSSEDVLPAGCTEWRVQTLAYLPQEDWAPTSLTRPAPPDSEGSRSSSSSSSSNNNNYCALGCYGGWHLSALPGNTQSSGPIPALACGLSCDHQGLETQQGVAWVLAGHCQRPGLHEDLQGMLLPSVLSKARSWTF</sequence>
<evidence type="ECO:0000250" key="1">
    <source>
        <dbReference type="UniProtKB" id="Q01114"/>
    </source>
</evidence>
<evidence type="ECO:0000255" key="2"/>
<evidence type="ECO:0000255" key="3">
    <source>
        <dbReference type="PROSITE-ProRule" id="PRU00316"/>
    </source>
</evidence>
<evidence type="ECO:0000256" key="4">
    <source>
        <dbReference type="SAM" id="MobiDB-lite"/>
    </source>
</evidence>
<evidence type="ECO:0000269" key="5">
    <source>
    </source>
</evidence>
<evidence type="ECO:0000269" key="6">
    <source>
    </source>
</evidence>
<evidence type="ECO:0000269" key="7">
    <source ref="4"/>
</evidence>
<evidence type="ECO:0000305" key="8"/>
<evidence type="ECO:0007829" key="9">
    <source>
        <dbReference type="PDB" id="7OX5"/>
    </source>
</evidence>
<protein>
    <recommendedName>
        <fullName>Interleukin-9 receptor</fullName>
        <shortName>IL-9 receptor</shortName>
        <shortName>IL-9R</shortName>
    </recommendedName>
    <cdAntigenName>CD129</cdAntigenName>
</protein>